<keyword id="KW-0067">ATP-binding</keyword>
<keyword id="KW-0167">Capsid protein</keyword>
<keyword id="KW-0191">Covalent protein-RNA linkage</keyword>
<keyword id="KW-0347">Helicase</keyword>
<keyword id="KW-1035">Host cytoplasm</keyword>
<keyword id="KW-1036">Host cytoplasmic vesicle</keyword>
<keyword id="KW-1043">Host membrane</keyword>
<keyword id="KW-1048">Host nucleus</keyword>
<keyword id="KW-0945">Host-virus interaction</keyword>
<keyword id="KW-0378">Hydrolase</keyword>
<keyword id="KW-0407">Ion channel</keyword>
<keyword id="KW-0406">Ion transport</keyword>
<keyword id="KW-0449">Lipoprotein</keyword>
<keyword id="KW-0460">Magnesium</keyword>
<keyword id="KW-0472">Membrane</keyword>
<keyword id="KW-0479">Metal-binding</keyword>
<keyword id="KW-0519">Myristate</keyword>
<keyword id="KW-0547">Nucleotide-binding</keyword>
<keyword id="KW-0548">Nucleotidyltransferase</keyword>
<keyword id="KW-0597">Phosphoprotein</keyword>
<keyword id="KW-0645">Protease</keyword>
<keyword id="KW-0694">RNA-binding</keyword>
<keyword id="KW-0696">RNA-directed RNA polymerase</keyword>
<keyword id="KW-1143">T=pseudo3 icosahedral capsid protein</keyword>
<keyword id="KW-0788">Thiol protease</keyword>
<keyword id="KW-0808">Transferase</keyword>
<keyword id="KW-0813">Transport</keyword>
<keyword id="KW-1161">Viral attachment to host cell</keyword>
<keyword id="KW-1182">Viral ion channel</keyword>
<keyword id="KW-0693">Viral RNA replication</keyword>
<keyword id="KW-0946">Virion</keyword>
<keyword id="KW-1160">Virus entry into host cell</keyword>
<organism>
    <name type="scientific">Human parechovirus 5 (strain CT86-6760)</name>
    <name type="common">HPeV-5</name>
    <name type="synonym">Echovirus 23</name>
    <dbReference type="NCBI Taxonomy" id="122961"/>
    <lineage>
        <taxon>Viruses</taxon>
        <taxon>Riboviria</taxon>
        <taxon>Orthornavirae</taxon>
        <taxon>Pisuviricota</taxon>
        <taxon>Pisoniviricetes</taxon>
        <taxon>Picornavirales</taxon>
        <taxon>Picornaviridae</taxon>
        <taxon>Paavivirinae</taxon>
        <taxon>Parechovirus</taxon>
        <taxon>Parechovirus A</taxon>
    </lineage>
</organism>
<comment type="function">
    <molecule>Capsid protein VP0</molecule>
    <text evidence="6 7">Forms an icosahedral capsid of pseudo T=3 symmetry together with capsid proteins VP1 and VP3 (By similarity). The capsid is 300 Angstroms in diameter, composed of 60 copies of each capsid protein and enclosing the viral positive strand RNA genome (By similarity). Capsid proteins interact with host alpha-V/beta-3 integrin heterodimer to provide virion attachment target cell (By similarity). This attachment induces virion internalization predominantly through clathrin-mediated endocytosis (By similarity). Binds packaging signals present in the viral RNA (By similarity).</text>
</comment>
<comment type="function">
    <molecule>Capsid protein VP3</molecule>
    <text evidence="6 7">Forms an icosahedral capsid of pseudo T=3 symmetry together with capsid proteins VP0 and VP1 (By similarity). The capsid is 300 Angstroms in diameter, composed of 60 copies of each capsid protein and enclosing the viral positive strand RNA genome (By similarity). Capsid proteins interact with host alpha-V/beta-3 integrin heterodimer to provide virion attachment target cell (By similarity). This attachment induces virion internalization predominantly through clathrin-mediated endocytosis (By similarity). Binds packaging signals present in the viral RNA (By similarity).</text>
</comment>
<comment type="function">
    <molecule>Capsid protein VP1</molecule>
    <text evidence="6 7">Forms an icosahedral capsid of pseudo T=3 symmetry together with capsid proteins VP0 and VP3 (By similarity). The capsid is 300 Angstroms in diameter, composed of 60 copies of each capsid protein and enclosing the viral positive strand RNA genome (By similarity). Capsid proteins interact with host alpha-V/beta-3 integrin heterodimer to provide virion attachment target cell (By similarity). This attachment induces virion internalization predominantly through clathrin-mediated endocytosis (By similarity). Binds packaging signals present in the viral RNA (By similarity).</text>
</comment>
<comment type="function">
    <molecule>Protein 2A H-NC</molecule>
    <text evidence="14">Is not a protease.</text>
</comment>
<comment type="function">
    <molecule>Protein 2B</molecule>
    <text evidence="2">Plays an essential role in the virus replication cycle by acting as a viroporin. Creates a pore in the host endoplasmic reticulum and as a consequence releases Ca2+ in the cytoplasm of infected cell. In turn, high levels of cytoplasmic calcium may trigger membrane trafficking and transport of viral ER-associated proteins to viroplasms, sites of viral genome replication.</text>
</comment>
<comment type="function">
    <molecule>Protein 2C</molecule>
    <text evidence="2">Induces and associates with structural rearrangements of intracellular membranes. Displays RNA-binding, nucleotide binding and NTPase activities. May play a role in virion morphogenesis and viral RNA encapsidation by interacting with the capsid protein VP3.</text>
</comment>
<comment type="function">
    <molecule>Protein 3A</molecule>
    <text evidence="2 8">Localizes the viral replication complex to the surface of membranous vesicles (By similarity). It inhibits host cell endoplasmic reticulum-to-Golgi apparatus transport and causes the disassembly of the Golgi complex, possibly through GBF1 interaction (By similarity). This would result in depletion of MHC, trail receptors and IFN receptors at the host cell surface (By similarity). Plays an essential role in viral RNA replication by recruiting ACBD3 and PI4KB at the viral replication sites, thereby allowing the formation of the rearranged membranous structures where viral replication takes place (By similarity).</text>
</comment>
<comment type="function">
    <molecule>Viral protein genome-linked</molecule>
    <text evidence="2">Acts as a primer for viral RNA replication and remains covalently bound to viral genomic RNA. VPg is uridylylated prior to priming replication into VPg-pUpU. The VPg-pUpU is then used as primer on the genomic RNA poly(A) by the RNA-dependent RNA polymerase to replicate the viral genome. Following genome release from the infecting virion in the cytoplasm, the VPg-RNA linkage is probably removed by host TDP2. During the late stage of the replication cycle, host TDP2 is excluded from sites of viral RNA synthesis and encapsidation, allowing for the generation of progeny virions.</text>
</comment>
<comment type="function">
    <molecule>Protease 3C</molecule>
    <text evidence="3 4">Cysteine protease that generates mature viral proteins from the precursor polyprotein (By similarity). In addition to its proteolytic activity, it binds to viral RNA, and thus influences viral genome replication. RNA and substrate bind cooperatively to the protease (By similarity).</text>
</comment>
<comment type="function">
    <molecule>RNA-directed RNA polymerase 3D-POL</molecule>
    <text evidence="2">Replicates the viral genomic RNA on the surface of intracellular membranes. Covalently attaches UMP to a tyrosine of VPg, which is used to prime RNA synthesis. The positive stranded RNA genome is first replicated at virus induced membranous vesicles, creating a dsRNA genomic replication form. This dsRNA is then used as template to synthesize positive stranded RNA genomes. ss(+)RNA genomes are either translated, replicated or encapsidated.</text>
</comment>
<comment type="catalytic activity">
    <molecule>RNA-directed RNA polymerase 3D-POL</molecule>
    <reaction evidence="10">
        <text>RNA(n) + a ribonucleoside 5'-triphosphate = RNA(n+1) + diphosphate</text>
        <dbReference type="Rhea" id="RHEA:21248"/>
        <dbReference type="Rhea" id="RHEA-COMP:14527"/>
        <dbReference type="Rhea" id="RHEA-COMP:17342"/>
        <dbReference type="ChEBI" id="CHEBI:33019"/>
        <dbReference type="ChEBI" id="CHEBI:61557"/>
        <dbReference type="ChEBI" id="CHEBI:140395"/>
        <dbReference type="EC" id="2.7.7.48"/>
    </reaction>
</comment>
<comment type="catalytic activity">
    <molecule>Protein 2C</molecule>
    <reaction evidence="2">
        <text>a ribonucleoside 5'-triphosphate + H2O = a ribonucleoside 5'-diphosphate + phosphate + H(+)</text>
        <dbReference type="Rhea" id="RHEA:23680"/>
        <dbReference type="ChEBI" id="CHEBI:15377"/>
        <dbReference type="ChEBI" id="CHEBI:15378"/>
        <dbReference type="ChEBI" id="CHEBI:43474"/>
        <dbReference type="ChEBI" id="CHEBI:57930"/>
        <dbReference type="ChEBI" id="CHEBI:61557"/>
        <dbReference type="EC" id="3.6.1.15"/>
    </reaction>
</comment>
<comment type="catalytic activity">
    <molecule>Protease 3C</molecule>
    <reaction evidence="12">
        <text>Selective cleavage of Gln-|-Gly bond in the poliovirus polyprotein. In other picornavirus reactions Glu may be substituted for Gln, and Ser or Thr for Gly.</text>
        <dbReference type="EC" id="3.4.22.28"/>
    </reaction>
</comment>
<comment type="cofactor">
    <molecule>RNA-directed RNA polymerase 3D-POL</molecule>
    <cofactor evidence="2">
        <name>Mg(2+)</name>
        <dbReference type="ChEBI" id="CHEBI:18420"/>
    </cofactor>
    <text evidence="2">Binds 2 magnesium ions that constitute a dinuclear catalytic metal center. The magnesium ions are not prebound but only present for catalysis.</text>
</comment>
<comment type="subunit">
    <molecule>Capsid protein VP0</molecule>
    <text evidence="2">Interacts with capsid protein VP1 and capsid protein VP3 to form heterotrimeric protomers. Five protomers subsequently associate to form pentamers which serve as building blocks for the capsid.</text>
</comment>
<comment type="subunit">
    <molecule>Capsid protein VP1</molecule>
    <text evidence="2">Interacts with capsid protein VP0, and capsid protein VP3 to form heterotrimeric protomers. Five protomers subsequently associate to form pentamers which serve as building blocks for the capsid.</text>
</comment>
<comment type="subunit">
    <molecule>Capsid protein VP3</molecule>
    <text evidence="2">Interacts with capsid protein VP0 and capsid protein VP1 to form heterotrimeric protomers. Five protomers subsequently associate to form pentamers which serve as building blocks for the capsid.</text>
</comment>
<comment type="subunit">
    <molecule>Protein 2C</molecule>
    <text evidence="2">Homohexamer; forms a hexameric ring structure with 6-fold symmetry characteristic of AAA+ ATPases.</text>
</comment>
<comment type="subunit">
    <molecule>Protein 3A</molecule>
    <text evidence="2 6">Homodimer (By similarity). Interacts with host ACBD3 (By similarity).</text>
</comment>
<comment type="subunit">
    <molecule>Viral protein genome-linked</molecule>
    <text evidence="2">Interacts with RNA-directed RNA polymerase.</text>
</comment>
<comment type="subunit">
    <molecule>RNA-directed RNA polymerase 3D-POL</molecule>
    <text evidence="2">Interacts with Viral protein genome-linked.</text>
</comment>
<comment type="subcellular location">
    <molecule>Capsid protein VP3</molecule>
    <subcellularLocation>
        <location evidence="15">Virion</location>
    </subcellularLocation>
    <subcellularLocation>
        <location evidence="15">Host cytoplasm</location>
    </subcellularLocation>
</comment>
<comment type="subcellular location">
    <molecule>Capsid protein VP1</molecule>
    <subcellularLocation>
        <location evidence="6">Virion</location>
    </subcellularLocation>
    <subcellularLocation>
        <location evidence="15">Host cytoplasm</location>
    </subcellularLocation>
</comment>
<comment type="subcellular location">
    <molecule>Protein 2A H-NC</molecule>
    <subcellularLocation>
        <location evidence="6">Host cytoplasm</location>
    </subcellularLocation>
    <subcellularLocation>
        <location evidence="6">Host nucleus</location>
        <location evidence="6">Host nucleolus</location>
    </subcellularLocation>
</comment>
<comment type="subcellular location">
    <molecule>Protein 2B</molecule>
    <subcellularLocation>
        <location evidence="6">Host cytoplasmic vesicle membrane</location>
        <topology evidence="6">Peripheral membrane protein</topology>
        <orientation evidence="6">Cytoplasmic side</orientation>
    </subcellularLocation>
    <text evidence="6">Probably localizes to the surface of intracellular membrane vesicles that are induced after virus infection as the site for viral RNA replication. These vesicles are derived from the endoplasmic reticulum.</text>
</comment>
<comment type="subcellular location">
    <molecule>Protein 2C</molecule>
    <subcellularLocation>
        <location evidence="6">Host cytoplasmic vesicle membrane</location>
        <topology evidence="6">Peripheral membrane protein</topology>
        <orientation evidence="6">Cytoplasmic side</orientation>
    </subcellularLocation>
    <text evidence="6">Probably localizes to the surface of intracellular membrane vesicles that are induced after virus infection as the site for viral RNA replication. These vesicles are derived from the endoplasmic reticulum.</text>
</comment>
<comment type="subcellular location">
    <molecule>Protein 3A</molecule>
    <subcellularLocation>
        <location evidence="6">Host cytoplasmic vesicle membrane</location>
        <topology evidence="6">Peripheral membrane protein</topology>
        <orientation evidence="6">Cytoplasmic side</orientation>
    </subcellularLocation>
    <text evidence="6">Probably localizes to the surface of intracellular membrane vesicles that are induced after virus infection as the site for viral RNA replication. These vesicles are derived from the endoplasmic reticulum.</text>
</comment>
<comment type="subcellular location">
    <molecule>Viral protein genome-linked</molecule>
    <subcellularLocation>
        <location evidence="15">Virion</location>
    </subcellularLocation>
</comment>
<comment type="subcellular location">
    <molecule>Protease 3C</molecule>
    <subcellularLocation>
        <location evidence="15">Host cytoplasm</location>
    </subcellularLocation>
</comment>
<comment type="subcellular location">
    <molecule>RNA-directed RNA polymerase 3D-POL</molecule>
    <subcellularLocation>
        <location evidence="15">Host cytoplasmic vesicle membrane</location>
        <topology evidence="15">Peripheral membrane protein</topology>
        <orientation evidence="15">Cytoplasmic side</orientation>
    </subcellularLocation>
    <text evidence="1">Probably localizes to the surface of intracellular membrane vesicles that are induced after virus infection as the site for viral RNA replication. These vesicles are derived from the endoplasmic reticulum (By similarity).</text>
</comment>
<comment type="domain">
    <molecule>Capsid protein VP0</molecule>
    <text evidence="6">The N-terminus mediates the interactions among pentamers (By similarity). In order to facilitate delivery of the virus genome into the cytoplasm, the N-termini of VP0s have to be released from contacts between pentamers and exposed at the particle surface, resulting in capsid disruption (By similarity).</text>
</comment>
<comment type="domain">
    <molecule>Capsid protein VP3</molecule>
    <text evidence="7">The N-terminus binds RNA.</text>
</comment>
<comment type="domain">
    <molecule>Protein 2A H-NC</molecule>
    <text evidence="14">Contains a H-NC box.</text>
</comment>
<comment type="PTM">
    <text evidence="1">VPg is uridylylated by the polymerase and is covalently linked to the 5'-end of genomic RNA. This uridylylated form acts as a nucleotide-peptide primer for the polymerase (By similarity).</text>
</comment>
<comment type="PTM">
    <text evidence="7">Specific enzymatic cleavages yield mature proteins (By similarity). All cleavages are catalyzed by P3C (By similarity).</text>
</comment>
<comment type="similarity">
    <text evidence="15">Belongs to the picornaviruses polyprotein family.</text>
</comment>
<feature type="chain" id="PRO_0000039740" description="Capsid protein VP0" evidence="9">
    <location>
        <begin position="1"/>
        <end position="290"/>
    </location>
</feature>
<feature type="chain" id="PRO_0000039741" description="Capsid protein VP3" evidence="9">
    <location>
        <begin position="291"/>
        <end position="549"/>
    </location>
</feature>
<feature type="chain" id="PRO_0000039742" description="Capsid protein VP1" evidence="9">
    <location>
        <begin position="550"/>
        <end position="784"/>
    </location>
</feature>
<feature type="chain" id="PRO_0000039743" description="Protein 2A H-NC" evidence="9">
    <location>
        <begin position="785"/>
        <end position="931"/>
    </location>
</feature>
<feature type="chain" id="PRO_0000039744" description="Protein 2B" evidence="9">
    <location>
        <begin position="932"/>
        <end position="1053"/>
    </location>
</feature>
<feature type="chain" id="PRO_0000039745" description="Protein 2C" evidence="9">
    <location>
        <begin position="1054"/>
        <end position="1382"/>
    </location>
</feature>
<feature type="chain" id="PRO_0000039747" description="Protein 3A" evidence="9">
    <location>
        <begin position="1383"/>
        <end position="1499"/>
    </location>
</feature>
<feature type="chain" id="PRO_0000311174" description="Viral protein genome-linked" evidence="1">
    <location>
        <begin position="1500"/>
        <end position="1519"/>
    </location>
</feature>
<feature type="chain" id="PRO_0000039748" description="Protease 3C" evidence="9">
    <location>
        <begin position="1520"/>
        <end position="1719"/>
    </location>
</feature>
<feature type="chain" id="PRO_0000039749" description="RNA-directed RNA polymerase 3D-POL" evidence="9">
    <location>
        <begin position="1720"/>
        <end position="2188"/>
    </location>
</feature>
<feature type="domain" description="LRAT" evidence="13">
    <location>
        <begin position="795"/>
        <end position="889"/>
    </location>
</feature>
<feature type="domain" description="SF3 helicase" evidence="11">
    <location>
        <begin position="1165"/>
        <end position="1326"/>
    </location>
</feature>
<feature type="domain" description="Peptidase C3" evidence="12">
    <location>
        <begin position="1526"/>
        <end position="1716"/>
    </location>
</feature>
<feature type="domain" description="RdRp catalytic" evidence="10">
    <location>
        <begin position="1953"/>
        <end position="2067"/>
    </location>
</feature>
<feature type="short sequence motif" description="Cell attachment site" evidence="9">
    <location>
        <begin position="772"/>
        <end position="774"/>
    </location>
</feature>
<feature type="active site" description="For protein 2A H-NC" evidence="5">
    <location>
        <position position="805"/>
    </location>
</feature>
<feature type="active site" description="For protein 2A H-NC; Acyl-thioester intermediate" evidence="5">
    <location>
        <position position="874"/>
    </location>
</feature>
<feature type="active site" description="For protease 3C activity" evidence="12">
    <location>
        <position position="1566"/>
    </location>
</feature>
<feature type="active site" description="For protease 3C activity" evidence="12">
    <location>
        <position position="1604"/>
    </location>
</feature>
<feature type="active site" description="For protease 3C activity" evidence="12">
    <location>
        <position position="1678"/>
    </location>
</feature>
<feature type="active site" description="Acyl-thioester intermediate" evidence="13">
    <location>
        <position position="1905"/>
    </location>
</feature>
<feature type="binding site" evidence="11">
    <location>
        <begin position="1193"/>
        <end position="1200"/>
    </location>
    <ligand>
        <name>ATP</name>
        <dbReference type="ChEBI" id="CHEBI:30616"/>
    </ligand>
</feature>
<feature type="binding site" evidence="2">
    <location>
        <position position="1959"/>
    </location>
    <ligand>
        <name>Mg(2+)</name>
        <dbReference type="ChEBI" id="CHEBI:18420"/>
        <label>1</label>
        <note>catalytic; for RdRp activity</note>
    </ligand>
</feature>
<feature type="binding site" evidence="2">
    <location>
        <position position="1959"/>
    </location>
    <ligand>
        <name>Mg(2+)</name>
        <dbReference type="ChEBI" id="CHEBI:18420"/>
        <label>2</label>
        <note>catalytic; for RdRp activity</note>
    </ligand>
</feature>
<feature type="binding site" evidence="2">
    <location>
        <position position="2053"/>
    </location>
    <ligand>
        <name>Mg(2+)</name>
        <dbReference type="ChEBI" id="CHEBI:18420"/>
        <label>1</label>
        <note>catalytic; for RdRp activity</note>
    </ligand>
</feature>
<feature type="binding site" evidence="2">
    <location>
        <position position="2053"/>
    </location>
    <ligand>
        <name>Mg(2+)</name>
        <dbReference type="ChEBI" id="CHEBI:18420"/>
        <label>2</label>
        <note>catalytic; for RdRp activity</note>
    </ligand>
</feature>
<feature type="site" description="Cleavage; by protease 3C" evidence="6">
    <location>
        <begin position="290"/>
        <end position="291"/>
    </location>
</feature>
<feature type="site" description="Cleavage; by protease 3C" evidence="6">
    <location>
        <begin position="549"/>
        <end position="550"/>
    </location>
</feature>
<feature type="site" description="Cleavage; by protease 3C" evidence="6">
    <location>
        <begin position="781"/>
        <end position="782"/>
    </location>
</feature>
<feature type="site" description="Cleavage; by protease 3C" evidence="6">
    <location>
        <begin position="931"/>
        <end position="932"/>
    </location>
</feature>
<feature type="site" description="Cleavage; by protease 3C" evidence="6">
    <location>
        <begin position="1053"/>
        <end position="1054"/>
    </location>
</feature>
<feature type="site" description="Cleavage; by protease 3C" evidence="6">
    <location>
        <begin position="1382"/>
        <end position="1383"/>
    </location>
</feature>
<feature type="site" description="Cleavage; by protease 3C" evidence="6">
    <location>
        <begin position="1499"/>
        <end position="1500"/>
    </location>
</feature>
<feature type="site" description="Cleavage; by protease 3C" evidence="6">
    <location>
        <begin position="1525"/>
        <end position="1526"/>
    </location>
</feature>
<feature type="site" description="Cleavage; by protease 3C" evidence="6">
    <location>
        <begin position="1719"/>
        <end position="1720"/>
    </location>
</feature>
<feature type="modified residue" description="O-(5'-phospho-RNA)-tyrosine" evidence="2">
    <location>
        <position position="1502"/>
    </location>
</feature>
<name>POLG_HPEV5</name>
<protein>
    <recommendedName>
        <fullName>Genome polyprotein</fullName>
    </recommendedName>
    <component>
        <recommendedName>
            <fullName>Capsid protein VP0</fullName>
        </recommendedName>
        <alternativeName>
            <fullName>P1AB</fullName>
        </alternativeName>
        <alternativeName>
            <fullName>Virion protein 0</fullName>
        </alternativeName>
    </component>
    <component>
        <recommendedName>
            <fullName>Capsid protein VP3</fullName>
        </recommendedName>
        <alternativeName>
            <fullName>P1C</fullName>
        </alternativeName>
        <alternativeName>
            <fullName>Virion protein 3</fullName>
        </alternativeName>
    </component>
    <component>
        <recommendedName>
            <fullName>Capsid protein VP1</fullName>
        </recommendedName>
        <alternativeName>
            <fullName>P1D</fullName>
        </alternativeName>
        <alternativeName>
            <fullName>Virion protein 1</fullName>
        </alternativeName>
    </component>
    <component>
        <recommendedName>
            <fullName evidence="14">Protein 2A H-NC</fullName>
            <shortName>P2A</shortName>
        </recommendedName>
        <alternativeName>
            <fullName>Protein 2A</fullName>
        </alternativeName>
    </component>
    <component>
        <recommendedName>
            <fullName>Protein 2B</fullName>
            <shortName>P2B</shortName>
        </recommendedName>
    </component>
    <component>
        <recommendedName>
            <fullName>Protein 2C</fullName>
            <shortName>P2C</shortName>
            <ecNumber evidence="2">3.6.1.15</ecNumber>
        </recommendedName>
    </component>
    <component>
        <recommendedName>
            <fullName>Protein 3A</fullName>
            <shortName>P3A</shortName>
        </recommendedName>
    </component>
    <component>
        <recommendedName>
            <fullName>Viral protein genome-linked</fullName>
            <shortName>VPg</shortName>
        </recommendedName>
        <alternativeName>
            <fullName>Protein 3B</fullName>
            <shortName>P3B</shortName>
        </alternativeName>
    </component>
    <component>
        <recommendedName>
            <fullName evidence="12">Protease 3C</fullName>
            <shortName evidence="12">P3C</shortName>
            <ecNumber evidence="12">3.4.22.28</ecNumber>
        </recommendedName>
        <alternativeName>
            <fullName>Picornain 3C</fullName>
        </alternativeName>
    </component>
    <component>
        <recommendedName>
            <fullName>RNA-directed RNA polymerase 3D-POL</fullName>
            <shortName>P3D-POL</shortName>
            <ecNumber evidence="10">2.7.7.48</ecNumber>
        </recommendedName>
    </component>
</protein>
<proteinExistence type="inferred from homology"/>
<accession>Q9YID8</accession>
<organismHost>
    <name type="scientific">Homo sapiens</name>
    <name type="common">Human</name>
    <dbReference type="NCBI Taxonomy" id="9606"/>
</organismHost>
<sequence length="2188" mass="246604">METIKSIADMATGFTNTIDSTVNAVTEGVSKIGNDSGGEILTKVADDASNLLGPNCVASTSQPENKDVVQATTTVNTLTNLTQHPSAPTMPFTPDFSNVDVFHSMAYDITTGDKNPSKLIRLDTTTWQHTWPRQHLINDVELPKAFWDKNSKPAYGQSRYFAAVRCGFHFQVQINVNQGTAGCALVVYEPKPIVTHGGHLEFGSYTNLPHVLMNLAETTQADLCIPYVSDTNYVKTDSSDLGRLRVYVWTPLTIPSSATNDVDVTVLGSLLQLDFQNPRTYDTDVNIYDNSPLDTKTKYGKLRFSKKILSMSTKYKWTRNKIDIAEGPGSMNMANVLSTTGAQSIALVGERAFYDPRTAGSKSRFGDMIHIAQLFSVMSDTTTPSTSSGIDDLGYLDWSATYVPQQVIHRNVVKLNQFSNLKPFVNAYTYFRGSLVLRMSVYASTFNRGRLRMGFFPNFTTNTTSEMDNAIYTICDIGSDNSFEITIPYTFSTWMRKTNGRPIGLFQVEVLNRLTYNSSCPNKVHCIVQGRLGNDARFYCPTGSLVEFQNSWGSQMDLTDPLCVEDDEAEDCKQTISPDELGLTSAQDDGPLGVEKPNYFLNFRAINVDIFTVSHTKVDNIFGRAWLALEHTFADDGTWRADLNFPTQGHGTLTRLFTYYSGELNVHVLYLSDNGFLRVTHAYDHDNDRSNFLSSNGVITVPAGEQMTLSVPFYSSKPLRTIRETGALGKLICKPLLSGTHSGKIEVYLSLRCPNLFFPSPAPKEKTSRALRGDLANFIDQSPYGQQQQTQMMKLAYLDRGFYKHYGIIVGGYVYQLDSDDIFKTALTGKARFTKTRLTPDWIVEEECELDYFRVKYLESSVNSEHIFSVDSNCETIAKDIFGTHTLSQHQAIGLVGAILLTAGLMSTIKTPVNATTIKEFFNHAIDGDEQGLSLLVQKCTTFFSSAATEILDNDLVKFIVKILVRILCYMVLYCHKPNILTTACLSTLLIMDVTSSSVLSPSCKALMQCLMDGDVKKLAEVVAESMSNTDDDEIKEQICDTVKYTKTILSNQGPFKGFNEVSTAFRHVDWWIHTLLKIKDMVLSVFKPSIESKAIQWLERNKEHVCSILDYASDIIVESKDQTKMKTQEFYQRYSDCLAKFKPIMAICFRSCHNSISNTVYRLFQELARIPNRISTQNDLIRVEPIGVWIQGEPGQGKSFLTHTLSRQLQKSCKLNGVYTNPTASEFMDGYDNQDIHLIDDLGQTRKEKDIEMLCNCISSVPFIVPMAHLEEKGKFYTSKLVIATTNKSDFSSTVLQDSGALKRRFPYIMHIRAAKAYSKSGKLNVSQAMSTMSTGECWEVSKNGRDWETLKLKDLVQKITEDYQERQKNYNAWKQQLENQTLDDLDDAVSYIKHNFPDAIPYIDEYLNIEMSTLIEQMEAFIEPRPSVFKCFAVKLPHKPGKQPRKLWAGSAGKIKSMLSFIERNKAWLTVVSAVTSAISILLLVTKIFKKEESKDERAYNPTLPITKPKGTFPVSQREFKNEAPYDGQLEHIISQMAYITGSTTGHLTHCAGYQHDEIILHGHSIKYLEQEEDLTLHYKNKVFPIENPSVTQVTLGGKPMDLAILKCKLPFRFKKNSKYYTNKIGTESMLIWMTEQGIITKEVQRVHHSGGIKTREGTESTKTISYTVKSCKGMCGGLLISKVEGNFKILGMHIAGNGEMGVAIPFNFLKNDMSDQGIITEVTPIQPMYINTKSQIHKSPVYGAVEVKMGPAVLSKSDTRLEEPVDCLIKKSASKYRVNKFQVNNELWQGVKACVKSKFREIFGVNGIVDMKTAILGTSHVNSMDLSTSAGYSLVKSGYKKKDLICLEPFSVSPMLEKLVQDKFHNLLKGNQITTIFNTCLKDELRKLDKIAAGKTRCIEACEVDYCIVYRMIMMEIYDKIYQTPCYYSGLAVGINPYKDWHFMINALNDYNYEMDYSQYDGSLSSMLLWEAVEVLAYCHDSPDLVMQLHKPVIDSDHVVFNERWLIHGGMPSGSPCTTVLNSLCNLMMCIYTTNLISPGVDCLPIVYGDDVILSLDREIEPERLQSIMADSFGAEVTGSRKDEPPSLKPRMEVEFLKRKPGYFPESTFIVGKLDTENMIQHLMWMKNFSTFKQQLQSYLMELCLHGKDIYQRYIKILDPYLKEWNIVVDDYDVVIAKLMPMVFD</sequence>
<evidence type="ECO:0000250" key="1"/>
<evidence type="ECO:0000250" key="2">
    <source>
        <dbReference type="UniProtKB" id="P03300"/>
    </source>
</evidence>
<evidence type="ECO:0000250" key="3">
    <source>
        <dbReference type="UniProtKB" id="P03304"/>
    </source>
</evidence>
<evidence type="ECO:0000250" key="4">
    <source>
        <dbReference type="UniProtKB" id="P12296"/>
    </source>
</evidence>
<evidence type="ECO:0000250" key="5">
    <source>
        <dbReference type="UniProtKB" id="P53816"/>
    </source>
</evidence>
<evidence type="ECO:0000250" key="6">
    <source>
        <dbReference type="UniProtKB" id="Q66578"/>
    </source>
</evidence>
<evidence type="ECO:0000250" key="7">
    <source>
        <dbReference type="UniProtKB" id="Q8JV21"/>
    </source>
</evidence>
<evidence type="ECO:0000250" key="8">
    <source>
        <dbReference type="UniProtKB" id="Q9YLG5"/>
    </source>
</evidence>
<evidence type="ECO:0000255" key="9"/>
<evidence type="ECO:0000255" key="10">
    <source>
        <dbReference type="PROSITE-ProRule" id="PRU00539"/>
    </source>
</evidence>
<evidence type="ECO:0000255" key="11">
    <source>
        <dbReference type="PROSITE-ProRule" id="PRU00551"/>
    </source>
</evidence>
<evidence type="ECO:0000255" key="12">
    <source>
        <dbReference type="PROSITE-ProRule" id="PRU01222"/>
    </source>
</evidence>
<evidence type="ECO:0000255" key="13">
    <source>
        <dbReference type="PROSITE-ProRule" id="PRU01283"/>
    </source>
</evidence>
<evidence type="ECO:0000303" key="14">
    <source>
    </source>
</evidence>
<evidence type="ECO:0000305" key="15"/>
<reference key="1">
    <citation type="journal article" date="1998" name="Virus Res.">
        <title>Complete sequence of echovirus 23 and its relationship to echovirus 22 and other human enteroviruses.</title>
        <authorList>
            <person name="Oberste M.S."/>
            <person name="Maher K."/>
            <person name="Pallansch M.A."/>
        </authorList>
    </citation>
    <scope>NUCLEOTIDE SEQUENCE [GENOMIC RNA]</scope>
</reference>
<reference key="2">
    <citation type="journal article" date="2021" name="Open Biol.">
        <title>A comparative analysis of parechovirus protein structures with other picornaviruses.</title>
        <authorList>
            <person name="Domanska A."/>
            <person name="Guryanov S."/>
            <person name="Butcher S.J."/>
        </authorList>
    </citation>
    <scope>REVIEW</scope>
</reference>
<dbReference type="EC" id="3.6.1.15" evidence="2"/>
<dbReference type="EC" id="3.4.22.28" evidence="12"/>
<dbReference type="EC" id="2.7.7.48" evidence="10"/>
<dbReference type="EMBL" id="AF055846">
    <property type="protein sequence ID" value="AAC79756.1"/>
    <property type="molecule type" value="Genomic_RNA"/>
</dbReference>
<dbReference type="SMR" id="Q9YID8"/>
<dbReference type="IntAct" id="Q9YID8">
    <property type="interactions" value="1"/>
</dbReference>
<dbReference type="Proteomes" id="UP000008274">
    <property type="component" value="Segment"/>
</dbReference>
<dbReference type="GO" id="GO:0044162">
    <property type="term" value="C:host cell cytoplasmic vesicle membrane"/>
    <property type="evidence" value="ECO:0007669"/>
    <property type="project" value="UniProtKB-SubCell"/>
</dbReference>
<dbReference type="GO" id="GO:0044196">
    <property type="term" value="C:host cell nucleolus"/>
    <property type="evidence" value="ECO:0007669"/>
    <property type="project" value="UniProtKB-SubCell"/>
</dbReference>
<dbReference type="GO" id="GO:0016020">
    <property type="term" value="C:membrane"/>
    <property type="evidence" value="ECO:0007669"/>
    <property type="project" value="UniProtKB-KW"/>
</dbReference>
<dbReference type="GO" id="GO:0039618">
    <property type="term" value="C:T=pseudo3 icosahedral viral capsid"/>
    <property type="evidence" value="ECO:0007669"/>
    <property type="project" value="UniProtKB-KW"/>
</dbReference>
<dbReference type="GO" id="GO:0005524">
    <property type="term" value="F:ATP binding"/>
    <property type="evidence" value="ECO:0007669"/>
    <property type="project" value="UniProtKB-KW"/>
</dbReference>
<dbReference type="GO" id="GO:0015267">
    <property type="term" value="F:channel activity"/>
    <property type="evidence" value="ECO:0007669"/>
    <property type="project" value="UniProtKB-KW"/>
</dbReference>
<dbReference type="GO" id="GO:0004197">
    <property type="term" value="F:cysteine-type endopeptidase activity"/>
    <property type="evidence" value="ECO:0007669"/>
    <property type="project" value="UniProtKB-EC"/>
</dbReference>
<dbReference type="GO" id="GO:0046872">
    <property type="term" value="F:metal ion binding"/>
    <property type="evidence" value="ECO:0007669"/>
    <property type="project" value="UniProtKB-KW"/>
</dbReference>
<dbReference type="GO" id="GO:0017111">
    <property type="term" value="F:ribonucleoside triphosphate phosphatase activity"/>
    <property type="evidence" value="ECO:0007669"/>
    <property type="project" value="UniProtKB-EC"/>
</dbReference>
<dbReference type="GO" id="GO:0003723">
    <property type="term" value="F:RNA binding"/>
    <property type="evidence" value="ECO:0007669"/>
    <property type="project" value="UniProtKB-KW"/>
</dbReference>
<dbReference type="GO" id="GO:0003724">
    <property type="term" value="F:RNA helicase activity"/>
    <property type="evidence" value="ECO:0007669"/>
    <property type="project" value="InterPro"/>
</dbReference>
<dbReference type="GO" id="GO:0003968">
    <property type="term" value="F:RNA-directed RNA polymerase activity"/>
    <property type="evidence" value="ECO:0007669"/>
    <property type="project" value="UniProtKB-KW"/>
</dbReference>
<dbReference type="GO" id="GO:0005198">
    <property type="term" value="F:structural molecule activity"/>
    <property type="evidence" value="ECO:0007669"/>
    <property type="project" value="InterPro"/>
</dbReference>
<dbReference type="GO" id="GO:0006351">
    <property type="term" value="P:DNA-templated transcription"/>
    <property type="evidence" value="ECO:0007669"/>
    <property type="project" value="InterPro"/>
</dbReference>
<dbReference type="GO" id="GO:0034220">
    <property type="term" value="P:monoatomic ion transmembrane transport"/>
    <property type="evidence" value="ECO:0007669"/>
    <property type="project" value="UniProtKB-KW"/>
</dbReference>
<dbReference type="GO" id="GO:0006508">
    <property type="term" value="P:proteolysis"/>
    <property type="evidence" value="ECO:0007669"/>
    <property type="project" value="UniProtKB-KW"/>
</dbReference>
<dbReference type="GO" id="GO:0046718">
    <property type="term" value="P:symbiont entry into host cell"/>
    <property type="evidence" value="ECO:0007669"/>
    <property type="project" value="UniProtKB-KW"/>
</dbReference>
<dbReference type="GO" id="GO:0039520">
    <property type="term" value="P:symbiont-mediated activation of host autophagy"/>
    <property type="evidence" value="ECO:0000250"/>
    <property type="project" value="UniProtKB"/>
</dbReference>
<dbReference type="GO" id="GO:0039694">
    <property type="term" value="P:viral RNA genome replication"/>
    <property type="evidence" value="ECO:0007669"/>
    <property type="project" value="InterPro"/>
</dbReference>
<dbReference type="GO" id="GO:0019062">
    <property type="term" value="P:virion attachment to host cell"/>
    <property type="evidence" value="ECO:0007669"/>
    <property type="project" value="UniProtKB-KW"/>
</dbReference>
<dbReference type="CDD" id="cd23217">
    <property type="entry name" value="Parechovirus_RdRp"/>
    <property type="match status" value="1"/>
</dbReference>
<dbReference type="CDD" id="cd00205">
    <property type="entry name" value="rhv_like"/>
    <property type="match status" value="2"/>
</dbReference>
<dbReference type="FunFam" id="3.30.70.270:FF:000092">
    <property type="entry name" value="Genome polyprotein"/>
    <property type="match status" value="1"/>
</dbReference>
<dbReference type="FunFam" id="3.40.50.300:FF:002653">
    <property type="entry name" value="Genome polyprotein"/>
    <property type="match status" value="1"/>
</dbReference>
<dbReference type="Gene3D" id="2.60.120.20">
    <property type="match status" value="2"/>
</dbReference>
<dbReference type="Gene3D" id="3.30.70.270">
    <property type="match status" value="1"/>
</dbReference>
<dbReference type="Gene3D" id="3.40.50.300">
    <property type="entry name" value="P-loop containing nucleotide triphosphate hydrolases"/>
    <property type="match status" value="1"/>
</dbReference>
<dbReference type="Gene3D" id="2.40.10.10">
    <property type="entry name" value="Trypsin-like serine proteases"/>
    <property type="match status" value="1"/>
</dbReference>
<dbReference type="InterPro" id="IPR043502">
    <property type="entry name" value="DNA/RNA_pol_sf"/>
</dbReference>
<dbReference type="InterPro" id="IPR004004">
    <property type="entry name" value="Helic/Pol/Pept_Calicivir-typ"/>
</dbReference>
<dbReference type="InterPro" id="IPR000605">
    <property type="entry name" value="Helicase_SF3_ssDNA/RNA_vir"/>
</dbReference>
<dbReference type="InterPro" id="IPR014759">
    <property type="entry name" value="Helicase_SF3_ssRNA_vir"/>
</dbReference>
<dbReference type="InterPro" id="IPR007053">
    <property type="entry name" value="LRAT_dom"/>
</dbReference>
<dbReference type="InterPro" id="IPR027417">
    <property type="entry name" value="P-loop_NTPase"/>
</dbReference>
<dbReference type="InterPro" id="IPR044067">
    <property type="entry name" value="PCV_3C_PRO"/>
</dbReference>
<dbReference type="InterPro" id="IPR000199">
    <property type="entry name" value="Peptidase_C3A/C3B_picornavir"/>
</dbReference>
<dbReference type="InterPro" id="IPR009003">
    <property type="entry name" value="Peptidase_S1_PA"/>
</dbReference>
<dbReference type="InterPro" id="IPR043504">
    <property type="entry name" value="Peptidase_S1_PA_chymotrypsin"/>
</dbReference>
<dbReference type="InterPro" id="IPR001676">
    <property type="entry name" value="Picornavirus_capsid"/>
</dbReference>
<dbReference type="InterPro" id="IPR043128">
    <property type="entry name" value="Rev_trsase/Diguanyl_cyclase"/>
</dbReference>
<dbReference type="InterPro" id="IPR033703">
    <property type="entry name" value="Rhv-like"/>
</dbReference>
<dbReference type="InterPro" id="IPR001205">
    <property type="entry name" value="RNA-dir_pol_C"/>
</dbReference>
<dbReference type="InterPro" id="IPR007094">
    <property type="entry name" value="RNA-dir_pol_PSvirus"/>
</dbReference>
<dbReference type="InterPro" id="IPR029053">
    <property type="entry name" value="Viral_coat"/>
</dbReference>
<dbReference type="InterPro" id="IPR009419">
    <property type="entry name" value="VPP_parechovir_P3A"/>
</dbReference>
<dbReference type="InterPro" id="IPR009407">
    <property type="entry name" value="VPP_parechovir_P3B"/>
</dbReference>
<dbReference type="Pfam" id="PF06344">
    <property type="entry name" value="Parecho_VpG"/>
    <property type="match status" value="1"/>
</dbReference>
<dbReference type="Pfam" id="PF00548">
    <property type="entry name" value="Peptidase_C3"/>
    <property type="match status" value="1"/>
</dbReference>
<dbReference type="Pfam" id="PF06363">
    <property type="entry name" value="Picorna_P3A"/>
    <property type="match status" value="1"/>
</dbReference>
<dbReference type="Pfam" id="PF00680">
    <property type="entry name" value="RdRP_1"/>
    <property type="match status" value="1"/>
</dbReference>
<dbReference type="Pfam" id="PF00073">
    <property type="entry name" value="Rhv"/>
    <property type="match status" value="2"/>
</dbReference>
<dbReference type="Pfam" id="PF00910">
    <property type="entry name" value="RNA_helicase"/>
    <property type="match status" value="1"/>
</dbReference>
<dbReference type="PRINTS" id="PR00918">
    <property type="entry name" value="CALICVIRUSNS"/>
</dbReference>
<dbReference type="SUPFAM" id="SSF56672">
    <property type="entry name" value="DNA/RNA polymerases"/>
    <property type="match status" value="1"/>
</dbReference>
<dbReference type="SUPFAM" id="SSF52540">
    <property type="entry name" value="P-loop containing nucleoside triphosphate hydrolases"/>
    <property type="match status" value="1"/>
</dbReference>
<dbReference type="SUPFAM" id="SSF88633">
    <property type="entry name" value="Positive stranded ssRNA viruses"/>
    <property type="match status" value="3"/>
</dbReference>
<dbReference type="SUPFAM" id="SSF50494">
    <property type="entry name" value="Trypsin-like serine proteases"/>
    <property type="match status" value="1"/>
</dbReference>
<dbReference type="PROSITE" id="PS51934">
    <property type="entry name" value="LRAT"/>
    <property type="match status" value="1"/>
</dbReference>
<dbReference type="PROSITE" id="PS51874">
    <property type="entry name" value="PCV_3C_PRO"/>
    <property type="match status" value="1"/>
</dbReference>
<dbReference type="PROSITE" id="PS50507">
    <property type="entry name" value="RDRP_SSRNA_POS"/>
    <property type="match status" value="1"/>
</dbReference>
<dbReference type="PROSITE" id="PS51218">
    <property type="entry name" value="SF3_HELICASE_2"/>
    <property type="match status" value="1"/>
</dbReference>